<feature type="chain" id="PRO_1000197057" description="tRNA modification GTPase MnmE">
    <location>
        <begin position="1"/>
        <end position="445"/>
    </location>
</feature>
<feature type="domain" description="TrmE-type G">
    <location>
        <begin position="213"/>
        <end position="370"/>
    </location>
</feature>
<feature type="binding site" evidence="1">
    <location>
        <position position="21"/>
    </location>
    <ligand>
        <name>(6S)-5-formyl-5,6,7,8-tetrahydrofolate</name>
        <dbReference type="ChEBI" id="CHEBI:57457"/>
    </ligand>
</feature>
<feature type="binding site" evidence="1">
    <location>
        <position position="78"/>
    </location>
    <ligand>
        <name>(6S)-5-formyl-5,6,7,8-tetrahydrofolate</name>
        <dbReference type="ChEBI" id="CHEBI:57457"/>
    </ligand>
</feature>
<feature type="binding site" evidence="1">
    <location>
        <position position="117"/>
    </location>
    <ligand>
        <name>(6S)-5-formyl-5,6,7,8-tetrahydrofolate</name>
        <dbReference type="ChEBI" id="CHEBI:57457"/>
    </ligand>
</feature>
<feature type="binding site" evidence="1">
    <location>
        <begin position="223"/>
        <end position="228"/>
    </location>
    <ligand>
        <name>GTP</name>
        <dbReference type="ChEBI" id="CHEBI:37565"/>
    </ligand>
</feature>
<feature type="binding site" evidence="1">
    <location>
        <position position="227"/>
    </location>
    <ligand>
        <name>Mg(2+)</name>
        <dbReference type="ChEBI" id="CHEBI:18420"/>
    </ligand>
</feature>
<feature type="binding site" evidence="1">
    <location>
        <begin position="242"/>
        <end position="248"/>
    </location>
    <ligand>
        <name>GTP</name>
        <dbReference type="ChEBI" id="CHEBI:37565"/>
    </ligand>
</feature>
<feature type="binding site" evidence="1">
    <location>
        <position position="248"/>
    </location>
    <ligand>
        <name>Mg(2+)</name>
        <dbReference type="ChEBI" id="CHEBI:18420"/>
    </ligand>
</feature>
<feature type="binding site" evidence="1">
    <location>
        <begin position="267"/>
        <end position="270"/>
    </location>
    <ligand>
        <name>GTP</name>
        <dbReference type="ChEBI" id="CHEBI:37565"/>
    </ligand>
</feature>
<feature type="binding site" evidence="1">
    <location>
        <position position="445"/>
    </location>
    <ligand>
        <name>(6S)-5-formyl-5,6,7,8-tetrahydrofolate</name>
        <dbReference type="ChEBI" id="CHEBI:57457"/>
    </ligand>
</feature>
<keyword id="KW-0963">Cytoplasm</keyword>
<keyword id="KW-0342">GTP-binding</keyword>
<keyword id="KW-0378">Hydrolase</keyword>
<keyword id="KW-0460">Magnesium</keyword>
<keyword id="KW-0479">Metal-binding</keyword>
<keyword id="KW-0547">Nucleotide-binding</keyword>
<keyword id="KW-0630">Potassium</keyword>
<keyword id="KW-1185">Reference proteome</keyword>
<keyword id="KW-0819">tRNA processing</keyword>
<dbReference type="EC" id="3.6.-.-" evidence="1"/>
<dbReference type="EMBL" id="CP000747">
    <property type="protein sequence ID" value="ACG79936.1"/>
    <property type="molecule type" value="Genomic_DNA"/>
</dbReference>
<dbReference type="RefSeq" id="WP_012524074.1">
    <property type="nucleotide sequence ID" value="NC_011144.1"/>
</dbReference>
<dbReference type="SMR" id="B4RD04"/>
<dbReference type="STRING" id="450851.PHZ_c3527"/>
<dbReference type="KEGG" id="pzu:PHZ_c3527"/>
<dbReference type="eggNOG" id="COG0486">
    <property type="taxonomic scope" value="Bacteria"/>
</dbReference>
<dbReference type="HOGENOM" id="CLU_019624_4_1_5"/>
<dbReference type="OrthoDB" id="9805918at2"/>
<dbReference type="Proteomes" id="UP000001868">
    <property type="component" value="Chromosome"/>
</dbReference>
<dbReference type="GO" id="GO:0005737">
    <property type="term" value="C:cytoplasm"/>
    <property type="evidence" value="ECO:0007669"/>
    <property type="project" value="UniProtKB-SubCell"/>
</dbReference>
<dbReference type="GO" id="GO:0005525">
    <property type="term" value="F:GTP binding"/>
    <property type="evidence" value="ECO:0007669"/>
    <property type="project" value="UniProtKB-UniRule"/>
</dbReference>
<dbReference type="GO" id="GO:0003924">
    <property type="term" value="F:GTPase activity"/>
    <property type="evidence" value="ECO:0007669"/>
    <property type="project" value="UniProtKB-UniRule"/>
</dbReference>
<dbReference type="GO" id="GO:0046872">
    <property type="term" value="F:metal ion binding"/>
    <property type="evidence" value="ECO:0007669"/>
    <property type="project" value="UniProtKB-KW"/>
</dbReference>
<dbReference type="GO" id="GO:0030488">
    <property type="term" value="P:tRNA methylation"/>
    <property type="evidence" value="ECO:0007669"/>
    <property type="project" value="TreeGrafter"/>
</dbReference>
<dbReference type="GO" id="GO:0002098">
    <property type="term" value="P:tRNA wobble uridine modification"/>
    <property type="evidence" value="ECO:0007669"/>
    <property type="project" value="TreeGrafter"/>
</dbReference>
<dbReference type="CDD" id="cd04164">
    <property type="entry name" value="trmE"/>
    <property type="match status" value="1"/>
</dbReference>
<dbReference type="CDD" id="cd14858">
    <property type="entry name" value="TrmE_N"/>
    <property type="match status" value="1"/>
</dbReference>
<dbReference type="FunFam" id="3.30.1360.120:FF:000007">
    <property type="entry name" value="tRNA modification GTPase GTPBP3, mitochondrial"/>
    <property type="match status" value="1"/>
</dbReference>
<dbReference type="Gene3D" id="3.40.50.300">
    <property type="entry name" value="P-loop containing nucleotide triphosphate hydrolases"/>
    <property type="match status" value="1"/>
</dbReference>
<dbReference type="Gene3D" id="3.30.1360.120">
    <property type="entry name" value="Probable tRNA modification gtpase trme, domain 1"/>
    <property type="match status" value="1"/>
</dbReference>
<dbReference type="Gene3D" id="1.20.120.430">
    <property type="entry name" value="tRNA modification GTPase MnmE domain 2"/>
    <property type="match status" value="1"/>
</dbReference>
<dbReference type="HAMAP" id="MF_00379">
    <property type="entry name" value="GTPase_MnmE"/>
    <property type="match status" value="1"/>
</dbReference>
<dbReference type="InterPro" id="IPR031168">
    <property type="entry name" value="G_TrmE"/>
</dbReference>
<dbReference type="InterPro" id="IPR006073">
    <property type="entry name" value="GTP-bd"/>
</dbReference>
<dbReference type="InterPro" id="IPR018948">
    <property type="entry name" value="GTP-bd_TrmE_N"/>
</dbReference>
<dbReference type="InterPro" id="IPR004520">
    <property type="entry name" value="GTPase_MnmE"/>
</dbReference>
<dbReference type="InterPro" id="IPR027368">
    <property type="entry name" value="MnmE_dom2"/>
</dbReference>
<dbReference type="InterPro" id="IPR025867">
    <property type="entry name" value="MnmE_helical"/>
</dbReference>
<dbReference type="InterPro" id="IPR027417">
    <property type="entry name" value="P-loop_NTPase"/>
</dbReference>
<dbReference type="InterPro" id="IPR005225">
    <property type="entry name" value="Small_GTP-bd"/>
</dbReference>
<dbReference type="InterPro" id="IPR027266">
    <property type="entry name" value="TrmE/GcvT_dom1"/>
</dbReference>
<dbReference type="NCBIfam" id="TIGR00450">
    <property type="entry name" value="mnmE_trmE_thdF"/>
    <property type="match status" value="1"/>
</dbReference>
<dbReference type="NCBIfam" id="NF003661">
    <property type="entry name" value="PRK05291.1-3"/>
    <property type="match status" value="1"/>
</dbReference>
<dbReference type="NCBIfam" id="TIGR00231">
    <property type="entry name" value="small_GTP"/>
    <property type="match status" value="1"/>
</dbReference>
<dbReference type="PANTHER" id="PTHR42714">
    <property type="entry name" value="TRNA MODIFICATION GTPASE GTPBP3"/>
    <property type="match status" value="1"/>
</dbReference>
<dbReference type="PANTHER" id="PTHR42714:SF2">
    <property type="entry name" value="TRNA MODIFICATION GTPASE GTPBP3, MITOCHONDRIAL"/>
    <property type="match status" value="1"/>
</dbReference>
<dbReference type="Pfam" id="PF01926">
    <property type="entry name" value="MMR_HSR1"/>
    <property type="match status" value="1"/>
</dbReference>
<dbReference type="Pfam" id="PF12631">
    <property type="entry name" value="MnmE_helical"/>
    <property type="match status" value="1"/>
</dbReference>
<dbReference type="Pfam" id="PF10396">
    <property type="entry name" value="TrmE_N"/>
    <property type="match status" value="1"/>
</dbReference>
<dbReference type="PRINTS" id="PR00326">
    <property type="entry name" value="GTP1OBG"/>
</dbReference>
<dbReference type="SUPFAM" id="SSF52540">
    <property type="entry name" value="P-loop containing nucleoside triphosphate hydrolases"/>
    <property type="match status" value="1"/>
</dbReference>
<dbReference type="SUPFAM" id="SSF116878">
    <property type="entry name" value="TrmE connector domain"/>
    <property type="match status" value="1"/>
</dbReference>
<dbReference type="PROSITE" id="PS51709">
    <property type="entry name" value="G_TRME"/>
    <property type="match status" value="1"/>
</dbReference>
<proteinExistence type="inferred from homology"/>
<evidence type="ECO:0000255" key="1">
    <source>
        <dbReference type="HAMAP-Rule" id="MF_00379"/>
    </source>
</evidence>
<accession>B4RD04</accession>
<name>MNME_PHEZH</name>
<protein>
    <recommendedName>
        <fullName evidence="1">tRNA modification GTPase MnmE</fullName>
        <ecNumber evidence="1">3.6.-.-</ecNumber>
    </recommendedName>
</protein>
<organism>
    <name type="scientific">Phenylobacterium zucineum (strain HLK1)</name>
    <dbReference type="NCBI Taxonomy" id="450851"/>
    <lineage>
        <taxon>Bacteria</taxon>
        <taxon>Pseudomonadati</taxon>
        <taxon>Pseudomonadota</taxon>
        <taxon>Alphaproteobacteria</taxon>
        <taxon>Caulobacterales</taxon>
        <taxon>Caulobacteraceae</taxon>
        <taxon>Phenylobacterium</taxon>
    </lineage>
</organism>
<reference key="1">
    <citation type="journal article" date="2008" name="BMC Genomics">
        <title>Complete genome of Phenylobacterium zucineum - a novel facultative intracellular bacterium isolated from human erythroleukemia cell line K562.</title>
        <authorList>
            <person name="Luo Y."/>
            <person name="Xu X."/>
            <person name="Ding Z."/>
            <person name="Liu Z."/>
            <person name="Zhang B."/>
            <person name="Yan Z."/>
            <person name="Sun J."/>
            <person name="Hu S."/>
            <person name="Hu X."/>
        </authorList>
    </citation>
    <scope>NUCLEOTIDE SEQUENCE [LARGE SCALE GENOMIC DNA]</scope>
    <source>
        <strain>HLK1</strain>
    </source>
</reference>
<gene>
    <name evidence="1" type="primary">mnmE</name>
    <name evidence="1" type="synonym">trmE</name>
    <name type="ordered locus">PHZ_c3527</name>
</gene>
<sequence length="445" mass="47082">MSDTIFAPATAPGRAAVAVVRVSGPRTQTAVRTLAGDLPEPRRASVRRLFDADGGEIDQALVLWFPGPGSYTGEDAAEFHVHGGTAVTGALVEALAGLGLRLAEPGEFTRRAFENGKLDLAQAEGVADLIDSETEGQRRQALEQLGGRLSQVQARWREALTEALALFEAAVDFPDEEVPADVAARARPVLETLAAEIEAAAADAARGERVREGFRIALVGAPNAGKSTLLNALAGREAAIVTATPGTTRDVIEVPMVLAGYKVLMADTAGLRDTADEIEAEGVRRARAWAEGADLRLWLVDGSSEETPDLPAEIGEGDLCLITKRDLPVGNAGAWAAEVARRIGIPAAEVTARGPGDMAWLKETLSERVVESLGGGEPPAATRLRHRELLAEASERLRHAIGHDEHVELAAEDVRLAARALDRITGRIDPEAVLGRIFATFCIGK</sequence>
<comment type="function">
    <text evidence="1">Exhibits a very high intrinsic GTPase hydrolysis rate. Involved in the addition of a carboxymethylaminomethyl (cmnm) group at the wobble position (U34) of certain tRNAs, forming tRNA-cmnm(5)s(2)U34.</text>
</comment>
<comment type="cofactor">
    <cofactor evidence="1">
        <name>K(+)</name>
        <dbReference type="ChEBI" id="CHEBI:29103"/>
    </cofactor>
    <text evidence="1">Binds 1 potassium ion per subunit.</text>
</comment>
<comment type="subunit">
    <text evidence="1">Homodimer. Heterotetramer of two MnmE and two MnmG subunits.</text>
</comment>
<comment type="subcellular location">
    <subcellularLocation>
        <location evidence="1">Cytoplasm</location>
    </subcellularLocation>
</comment>
<comment type="similarity">
    <text evidence="1">Belongs to the TRAFAC class TrmE-Era-EngA-EngB-Septin-like GTPase superfamily. TrmE GTPase family.</text>
</comment>